<proteinExistence type="inferred from homology"/>
<keyword id="KW-0021">Allosteric enzyme</keyword>
<keyword id="KW-0963">Cytoplasm</keyword>
<keyword id="KW-0378">Hydrolase</keyword>
<keyword id="KW-0479">Metal-binding</keyword>
<keyword id="KW-0645">Protease</keyword>
<keyword id="KW-1185">Reference proteome</keyword>
<keyword id="KW-0915">Sodium</keyword>
<keyword id="KW-0888">Threonine protease</keyword>
<evidence type="ECO:0000255" key="1">
    <source>
        <dbReference type="HAMAP-Rule" id="MF_00248"/>
    </source>
</evidence>
<accession>A9BUJ5</accession>
<dbReference type="EC" id="3.4.25.2" evidence="1"/>
<dbReference type="EMBL" id="CP000884">
    <property type="protein sequence ID" value="ABX34103.1"/>
    <property type="molecule type" value="Genomic_DNA"/>
</dbReference>
<dbReference type="RefSeq" id="WP_012203389.1">
    <property type="nucleotide sequence ID" value="NC_010002.1"/>
</dbReference>
<dbReference type="SMR" id="A9BUJ5"/>
<dbReference type="STRING" id="398578.Daci_1459"/>
<dbReference type="MEROPS" id="T01.007"/>
<dbReference type="GeneID" id="24114129"/>
<dbReference type="KEGG" id="dac:Daci_1459"/>
<dbReference type="eggNOG" id="COG5405">
    <property type="taxonomic scope" value="Bacteria"/>
</dbReference>
<dbReference type="HOGENOM" id="CLU_093872_1_0_4"/>
<dbReference type="Proteomes" id="UP000000784">
    <property type="component" value="Chromosome"/>
</dbReference>
<dbReference type="GO" id="GO:0009376">
    <property type="term" value="C:HslUV protease complex"/>
    <property type="evidence" value="ECO:0007669"/>
    <property type="project" value="UniProtKB-UniRule"/>
</dbReference>
<dbReference type="GO" id="GO:0005839">
    <property type="term" value="C:proteasome core complex"/>
    <property type="evidence" value="ECO:0007669"/>
    <property type="project" value="InterPro"/>
</dbReference>
<dbReference type="GO" id="GO:0046872">
    <property type="term" value="F:metal ion binding"/>
    <property type="evidence" value="ECO:0007669"/>
    <property type="project" value="UniProtKB-KW"/>
</dbReference>
<dbReference type="GO" id="GO:0004298">
    <property type="term" value="F:threonine-type endopeptidase activity"/>
    <property type="evidence" value="ECO:0007669"/>
    <property type="project" value="UniProtKB-KW"/>
</dbReference>
<dbReference type="GO" id="GO:0051603">
    <property type="term" value="P:proteolysis involved in protein catabolic process"/>
    <property type="evidence" value="ECO:0007669"/>
    <property type="project" value="InterPro"/>
</dbReference>
<dbReference type="CDD" id="cd01913">
    <property type="entry name" value="protease_HslV"/>
    <property type="match status" value="1"/>
</dbReference>
<dbReference type="FunFam" id="3.60.20.10:FF:000002">
    <property type="entry name" value="ATP-dependent protease subunit HslV"/>
    <property type="match status" value="1"/>
</dbReference>
<dbReference type="Gene3D" id="3.60.20.10">
    <property type="entry name" value="Glutamine Phosphoribosylpyrophosphate, subunit 1, domain 1"/>
    <property type="match status" value="1"/>
</dbReference>
<dbReference type="HAMAP" id="MF_00248">
    <property type="entry name" value="HslV"/>
    <property type="match status" value="1"/>
</dbReference>
<dbReference type="InterPro" id="IPR022281">
    <property type="entry name" value="ATP-dep_Prtase_HsIV_su"/>
</dbReference>
<dbReference type="InterPro" id="IPR029055">
    <property type="entry name" value="Ntn_hydrolases_N"/>
</dbReference>
<dbReference type="InterPro" id="IPR001353">
    <property type="entry name" value="Proteasome_sua/b"/>
</dbReference>
<dbReference type="InterPro" id="IPR023333">
    <property type="entry name" value="Proteasome_suB-type"/>
</dbReference>
<dbReference type="NCBIfam" id="TIGR03692">
    <property type="entry name" value="ATP_dep_HslV"/>
    <property type="match status" value="1"/>
</dbReference>
<dbReference type="NCBIfam" id="NF003964">
    <property type="entry name" value="PRK05456.1"/>
    <property type="match status" value="1"/>
</dbReference>
<dbReference type="PANTHER" id="PTHR32194:SF0">
    <property type="entry name" value="ATP-DEPENDENT PROTEASE SUBUNIT HSLV"/>
    <property type="match status" value="1"/>
</dbReference>
<dbReference type="PANTHER" id="PTHR32194">
    <property type="entry name" value="METALLOPROTEASE TLDD"/>
    <property type="match status" value="1"/>
</dbReference>
<dbReference type="Pfam" id="PF00227">
    <property type="entry name" value="Proteasome"/>
    <property type="match status" value="1"/>
</dbReference>
<dbReference type="PIRSF" id="PIRSF039093">
    <property type="entry name" value="HslV"/>
    <property type="match status" value="1"/>
</dbReference>
<dbReference type="SUPFAM" id="SSF56235">
    <property type="entry name" value="N-terminal nucleophile aminohydrolases (Ntn hydrolases)"/>
    <property type="match status" value="1"/>
</dbReference>
<dbReference type="PROSITE" id="PS51476">
    <property type="entry name" value="PROTEASOME_BETA_2"/>
    <property type="match status" value="1"/>
</dbReference>
<reference key="1">
    <citation type="submission" date="2007-11" db="EMBL/GenBank/DDBJ databases">
        <title>Complete sequence of Delftia acidovorans DSM 14801 / SPH-1.</title>
        <authorList>
            <person name="Copeland A."/>
            <person name="Lucas S."/>
            <person name="Lapidus A."/>
            <person name="Barry K."/>
            <person name="Glavina del Rio T."/>
            <person name="Dalin E."/>
            <person name="Tice H."/>
            <person name="Pitluck S."/>
            <person name="Lowry S."/>
            <person name="Clum A."/>
            <person name="Schmutz J."/>
            <person name="Larimer F."/>
            <person name="Land M."/>
            <person name="Hauser L."/>
            <person name="Kyrpides N."/>
            <person name="Kim E."/>
            <person name="Schleheck D."/>
            <person name="Richardson P."/>
        </authorList>
    </citation>
    <scope>NUCLEOTIDE SEQUENCE [LARGE SCALE GENOMIC DNA]</scope>
    <source>
        <strain>DSM 14801 / SPH-1</strain>
    </source>
</reference>
<sequence>MEQYHGTTIISVRRQTPEGVQVAIGGDGQVTLGNIVVKGTARKVRKLYHGKVLAGFAGATADAFTLFERFEAKLEKHQGHLTRAAIELTKDWRTDRVLRRLEAMLAVADASASLIITGNGDVLEPEQGIVSIGSGGAYAHSAAKALLTNTELSAEEIVRKSLAIAGELCIYTNMHHTVETL</sequence>
<gene>
    <name evidence="1" type="primary">hslV</name>
    <name type="ordered locus">Daci_1459</name>
</gene>
<feature type="chain" id="PRO_1000100888" description="ATP-dependent protease subunit HslV">
    <location>
        <begin position="1"/>
        <end position="181"/>
    </location>
</feature>
<feature type="active site" evidence="1">
    <location>
        <position position="7"/>
    </location>
</feature>
<feature type="binding site" evidence="1">
    <location>
        <position position="166"/>
    </location>
    <ligand>
        <name>Na(+)</name>
        <dbReference type="ChEBI" id="CHEBI:29101"/>
    </ligand>
</feature>
<feature type="binding site" evidence="1">
    <location>
        <position position="169"/>
    </location>
    <ligand>
        <name>Na(+)</name>
        <dbReference type="ChEBI" id="CHEBI:29101"/>
    </ligand>
</feature>
<feature type="binding site" evidence="1">
    <location>
        <position position="172"/>
    </location>
    <ligand>
        <name>Na(+)</name>
        <dbReference type="ChEBI" id="CHEBI:29101"/>
    </ligand>
</feature>
<name>HSLV_DELAS</name>
<organism>
    <name type="scientific">Delftia acidovorans (strain DSM 14801 / SPH-1)</name>
    <dbReference type="NCBI Taxonomy" id="398578"/>
    <lineage>
        <taxon>Bacteria</taxon>
        <taxon>Pseudomonadati</taxon>
        <taxon>Pseudomonadota</taxon>
        <taxon>Betaproteobacteria</taxon>
        <taxon>Burkholderiales</taxon>
        <taxon>Comamonadaceae</taxon>
        <taxon>Delftia</taxon>
    </lineage>
</organism>
<comment type="function">
    <text evidence="1">Protease subunit of a proteasome-like degradation complex believed to be a general protein degrading machinery.</text>
</comment>
<comment type="catalytic activity">
    <reaction evidence="1">
        <text>ATP-dependent cleavage of peptide bonds with broad specificity.</text>
        <dbReference type="EC" id="3.4.25.2"/>
    </reaction>
</comment>
<comment type="activity regulation">
    <text evidence="1">Allosterically activated by HslU binding.</text>
</comment>
<comment type="subunit">
    <text evidence="1">A double ring-shaped homohexamer of HslV is capped on each side by a ring-shaped HslU homohexamer. The assembly of the HslU/HslV complex is dependent on binding of ATP.</text>
</comment>
<comment type="subcellular location">
    <subcellularLocation>
        <location evidence="1">Cytoplasm</location>
    </subcellularLocation>
</comment>
<comment type="similarity">
    <text evidence="1">Belongs to the peptidase T1B family. HslV subfamily.</text>
</comment>
<protein>
    <recommendedName>
        <fullName evidence="1">ATP-dependent protease subunit HslV</fullName>
        <ecNumber evidence="1">3.4.25.2</ecNumber>
    </recommendedName>
</protein>